<reference key="1">
    <citation type="journal article" date="2005" name="Science">
        <title>The transcriptional landscape of the mammalian genome.</title>
        <authorList>
            <person name="Carninci P."/>
            <person name="Kasukawa T."/>
            <person name="Katayama S."/>
            <person name="Gough J."/>
            <person name="Frith M.C."/>
            <person name="Maeda N."/>
            <person name="Oyama R."/>
            <person name="Ravasi T."/>
            <person name="Lenhard B."/>
            <person name="Wells C."/>
            <person name="Kodzius R."/>
            <person name="Shimokawa K."/>
            <person name="Bajic V.B."/>
            <person name="Brenner S.E."/>
            <person name="Batalov S."/>
            <person name="Forrest A.R."/>
            <person name="Zavolan M."/>
            <person name="Davis M.J."/>
            <person name="Wilming L.G."/>
            <person name="Aidinis V."/>
            <person name="Allen J.E."/>
            <person name="Ambesi-Impiombato A."/>
            <person name="Apweiler R."/>
            <person name="Aturaliya R.N."/>
            <person name="Bailey T.L."/>
            <person name="Bansal M."/>
            <person name="Baxter L."/>
            <person name="Beisel K.W."/>
            <person name="Bersano T."/>
            <person name="Bono H."/>
            <person name="Chalk A.M."/>
            <person name="Chiu K.P."/>
            <person name="Choudhary V."/>
            <person name="Christoffels A."/>
            <person name="Clutterbuck D.R."/>
            <person name="Crowe M.L."/>
            <person name="Dalla E."/>
            <person name="Dalrymple B.P."/>
            <person name="de Bono B."/>
            <person name="Della Gatta G."/>
            <person name="di Bernardo D."/>
            <person name="Down T."/>
            <person name="Engstrom P."/>
            <person name="Fagiolini M."/>
            <person name="Faulkner G."/>
            <person name="Fletcher C.F."/>
            <person name="Fukushima T."/>
            <person name="Furuno M."/>
            <person name="Futaki S."/>
            <person name="Gariboldi M."/>
            <person name="Georgii-Hemming P."/>
            <person name="Gingeras T.R."/>
            <person name="Gojobori T."/>
            <person name="Green R.E."/>
            <person name="Gustincich S."/>
            <person name="Harbers M."/>
            <person name="Hayashi Y."/>
            <person name="Hensch T.K."/>
            <person name="Hirokawa N."/>
            <person name="Hill D."/>
            <person name="Huminiecki L."/>
            <person name="Iacono M."/>
            <person name="Ikeo K."/>
            <person name="Iwama A."/>
            <person name="Ishikawa T."/>
            <person name="Jakt M."/>
            <person name="Kanapin A."/>
            <person name="Katoh M."/>
            <person name="Kawasawa Y."/>
            <person name="Kelso J."/>
            <person name="Kitamura H."/>
            <person name="Kitano H."/>
            <person name="Kollias G."/>
            <person name="Krishnan S.P."/>
            <person name="Kruger A."/>
            <person name="Kummerfeld S.K."/>
            <person name="Kurochkin I.V."/>
            <person name="Lareau L.F."/>
            <person name="Lazarevic D."/>
            <person name="Lipovich L."/>
            <person name="Liu J."/>
            <person name="Liuni S."/>
            <person name="McWilliam S."/>
            <person name="Madan Babu M."/>
            <person name="Madera M."/>
            <person name="Marchionni L."/>
            <person name="Matsuda H."/>
            <person name="Matsuzawa S."/>
            <person name="Miki H."/>
            <person name="Mignone F."/>
            <person name="Miyake S."/>
            <person name="Morris K."/>
            <person name="Mottagui-Tabar S."/>
            <person name="Mulder N."/>
            <person name="Nakano N."/>
            <person name="Nakauchi H."/>
            <person name="Ng P."/>
            <person name="Nilsson R."/>
            <person name="Nishiguchi S."/>
            <person name="Nishikawa S."/>
            <person name="Nori F."/>
            <person name="Ohara O."/>
            <person name="Okazaki Y."/>
            <person name="Orlando V."/>
            <person name="Pang K.C."/>
            <person name="Pavan W.J."/>
            <person name="Pavesi G."/>
            <person name="Pesole G."/>
            <person name="Petrovsky N."/>
            <person name="Piazza S."/>
            <person name="Reed J."/>
            <person name="Reid J.F."/>
            <person name="Ring B.Z."/>
            <person name="Ringwald M."/>
            <person name="Rost B."/>
            <person name="Ruan Y."/>
            <person name="Salzberg S.L."/>
            <person name="Sandelin A."/>
            <person name="Schneider C."/>
            <person name="Schoenbach C."/>
            <person name="Sekiguchi K."/>
            <person name="Semple C.A."/>
            <person name="Seno S."/>
            <person name="Sessa L."/>
            <person name="Sheng Y."/>
            <person name="Shibata Y."/>
            <person name="Shimada H."/>
            <person name="Shimada K."/>
            <person name="Silva D."/>
            <person name="Sinclair B."/>
            <person name="Sperling S."/>
            <person name="Stupka E."/>
            <person name="Sugiura K."/>
            <person name="Sultana R."/>
            <person name="Takenaka Y."/>
            <person name="Taki K."/>
            <person name="Tammoja K."/>
            <person name="Tan S.L."/>
            <person name="Tang S."/>
            <person name="Taylor M.S."/>
            <person name="Tegner J."/>
            <person name="Teichmann S.A."/>
            <person name="Ueda H.R."/>
            <person name="van Nimwegen E."/>
            <person name="Verardo R."/>
            <person name="Wei C.L."/>
            <person name="Yagi K."/>
            <person name="Yamanishi H."/>
            <person name="Zabarovsky E."/>
            <person name="Zhu S."/>
            <person name="Zimmer A."/>
            <person name="Hide W."/>
            <person name="Bult C."/>
            <person name="Grimmond S.M."/>
            <person name="Teasdale R.D."/>
            <person name="Liu E.T."/>
            <person name="Brusic V."/>
            <person name="Quackenbush J."/>
            <person name="Wahlestedt C."/>
            <person name="Mattick J.S."/>
            <person name="Hume D.A."/>
            <person name="Kai C."/>
            <person name="Sasaki D."/>
            <person name="Tomaru Y."/>
            <person name="Fukuda S."/>
            <person name="Kanamori-Katayama M."/>
            <person name="Suzuki M."/>
            <person name="Aoki J."/>
            <person name="Arakawa T."/>
            <person name="Iida J."/>
            <person name="Imamura K."/>
            <person name="Itoh M."/>
            <person name="Kato T."/>
            <person name="Kawaji H."/>
            <person name="Kawagashira N."/>
            <person name="Kawashima T."/>
            <person name="Kojima M."/>
            <person name="Kondo S."/>
            <person name="Konno H."/>
            <person name="Nakano K."/>
            <person name="Ninomiya N."/>
            <person name="Nishio T."/>
            <person name="Okada M."/>
            <person name="Plessy C."/>
            <person name="Shibata K."/>
            <person name="Shiraki T."/>
            <person name="Suzuki S."/>
            <person name="Tagami M."/>
            <person name="Waki K."/>
            <person name="Watahiki A."/>
            <person name="Okamura-Oho Y."/>
            <person name="Suzuki H."/>
            <person name="Kawai J."/>
            <person name="Hayashizaki Y."/>
        </authorList>
    </citation>
    <scope>NUCLEOTIDE SEQUENCE [LARGE SCALE MRNA] (ISOFORMS 1; 2 AND 4)</scope>
    <source>
        <strain>C57BL/6J</strain>
        <tissue>Embryonic gonad</tissue>
        <tissue>Heart</tissue>
        <tissue>Kidney</tissue>
        <tissue>Lung</tissue>
    </source>
</reference>
<reference key="2">
    <citation type="journal article" date="2004" name="Genome Res.">
        <title>The status, quality, and expansion of the NIH full-length cDNA project: the Mammalian Gene Collection (MGC).</title>
        <authorList>
            <consortium name="The MGC Project Team"/>
        </authorList>
    </citation>
    <scope>NUCLEOTIDE SEQUENCE [LARGE SCALE MRNA] (ISOFORM 3)</scope>
    <source>
        <strain>FVB/N</strain>
        <tissue>Brain</tissue>
        <tissue>Liver</tissue>
    </source>
</reference>
<keyword id="KW-0025">Alternative splicing</keyword>
<keyword id="KW-0472">Membrane</keyword>
<keyword id="KW-0597">Phosphoprotein</keyword>
<keyword id="KW-1185">Reference proteome</keyword>
<keyword id="KW-0812">Transmembrane</keyword>
<keyword id="KW-1133">Transmembrane helix</keyword>
<protein>
    <recommendedName>
        <fullName>WW domain binding protein 1-like</fullName>
    </recommendedName>
    <alternativeName>
        <fullName>Outcome predictor in acute leukemia 1 homolog</fullName>
    </alternativeName>
</protein>
<feature type="chain" id="PRO_0000241451" description="WW domain binding protein 1-like">
    <location>
        <begin position="1"/>
        <end position="348"/>
    </location>
</feature>
<feature type="transmembrane region" description="Helical" evidence="2">
    <location>
        <begin position="42"/>
        <end position="62"/>
    </location>
</feature>
<feature type="region of interest" description="Disordered" evidence="3">
    <location>
        <begin position="111"/>
        <end position="253"/>
    </location>
</feature>
<feature type="region of interest" description="Disordered" evidence="3">
    <location>
        <begin position="306"/>
        <end position="348"/>
    </location>
</feature>
<feature type="compositionally biased region" description="Pro residues" evidence="3">
    <location>
        <begin position="134"/>
        <end position="155"/>
    </location>
</feature>
<feature type="compositionally biased region" description="Low complexity" evidence="3">
    <location>
        <begin position="156"/>
        <end position="177"/>
    </location>
</feature>
<feature type="compositionally biased region" description="Basic and acidic residues" evidence="3">
    <location>
        <begin position="220"/>
        <end position="234"/>
    </location>
</feature>
<feature type="compositionally biased region" description="Polar residues" evidence="3">
    <location>
        <begin position="331"/>
        <end position="348"/>
    </location>
</feature>
<feature type="modified residue" description="Phosphoserine" evidence="1">
    <location>
        <position position="177"/>
    </location>
</feature>
<feature type="splice variant" id="VSP_019442" description="In isoform 2 and isoform 3." evidence="4 5">
    <original>MPFLWGLR</original>
    <variation>MERRRLLGGMALLLLQALPSPLSVRAEPP</variation>
    <location>
        <begin position="1"/>
        <end position="8"/>
    </location>
</feature>
<feature type="splice variant" id="VSP_019443" description="In isoform 4." evidence="5">
    <original>MPFLWGLR</original>
    <variation>MERRRLLGGMALLLLQALPSPLSVRAEPPQVRLRSQKTVGLVRAY</variation>
    <location>
        <begin position="1"/>
        <end position="8"/>
    </location>
</feature>
<feature type="splice variant" id="VSP_041951" description="In isoform 2." evidence="5">
    <original>WFWLVWTVVIILSCCCVCHHRRAKHRLQAQ</original>
    <variation>CKSLSRGFLASQGPGYCLCSLGNRGLASLF</variation>
    <location>
        <begin position="44"/>
        <end position="73"/>
    </location>
</feature>
<feature type="splice variant" id="VSP_041952" description="In isoform 2." evidence="5">
    <location>
        <begin position="74"/>
        <end position="348"/>
    </location>
</feature>
<feature type="sequence conflict" description="In Ref. 2; AAH26369." evidence="6" ref="2">
    <original>A</original>
    <variation>T</variation>
    <location>
        <position position="150"/>
    </location>
</feature>
<organism>
    <name type="scientific">Mus musculus</name>
    <name type="common">Mouse</name>
    <dbReference type="NCBI Taxonomy" id="10090"/>
    <lineage>
        <taxon>Eukaryota</taxon>
        <taxon>Metazoa</taxon>
        <taxon>Chordata</taxon>
        <taxon>Craniata</taxon>
        <taxon>Vertebrata</taxon>
        <taxon>Euteleostomi</taxon>
        <taxon>Mammalia</taxon>
        <taxon>Eutheria</taxon>
        <taxon>Euarchontoglires</taxon>
        <taxon>Glires</taxon>
        <taxon>Rodentia</taxon>
        <taxon>Myomorpha</taxon>
        <taxon>Muroidea</taxon>
        <taxon>Muridae</taxon>
        <taxon>Murinae</taxon>
        <taxon>Mus</taxon>
        <taxon>Mus</taxon>
    </lineage>
</organism>
<comment type="subcellular location">
    <subcellularLocation>
        <location evidence="6">Membrane</location>
        <topology evidence="6">Single-pass membrane protein</topology>
    </subcellularLocation>
</comment>
<comment type="alternative products">
    <event type="alternative splicing"/>
    <isoform>
        <id>Q8BGW2-1</id>
        <name>1</name>
        <sequence type="displayed"/>
    </isoform>
    <isoform>
        <id>Q8BGW2-2</id>
        <name>2</name>
        <sequence type="described" ref="VSP_019442 VSP_041951 VSP_041952"/>
    </isoform>
    <isoform>
        <id>Q8BGW2-3</id>
        <name>3</name>
        <sequence type="described" ref="VSP_019442"/>
    </isoform>
    <isoform>
        <id>Q8BGW2-4</id>
        <name>4</name>
        <sequence type="described" ref="VSP_019443"/>
    </isoform>
</comment>
<comment type="miscellaneous">
    <molecule>Isoform 2</molecule>
    <text evidence="6">May be produced at very low levels due to a premature stop codon in the mRNA, leading to nonsense-mediated mRNA decay.</text>
</comment>
<comment type="sequence caution" evidence="6">
    <conflict type="erroneous initiation">
        <sequence resource="EMBL-CDS" id="AAH26369"/>
    </conflict>
    <text>Truncated N-terminus.</text>
</comment>
<comment type="sequence caution" evidence="6">
    <conflict type="erroneous initiation">
        <sequence resource="EMBL-CDS" id="AAH58949"/>
    </conflict>
    <text>Truncated N-terminus.</text>
</comment>
<comment type="sequence caution" evidence="6">
    <conflict type="erroneous translation">
        <sequence resource="EMBL-CDS" id="BAE41050"/>
    </conflict>
    <text>Wrong choice of CDS.</text>
</comment>
<proteinExistence type="evidence at transcript level"/>
<gene>
    <name type="primary">Wbp1l</name>
    <name type="synonym">D19Wsu162e</name>
    <name type="synonym">Opal1</name>
</gene>
<evidence type="ECO:0000250" key="1">
    <source>
        <dbReference type="UniProtKB" id="Q9NX94"/>
    </source>
</evidence>
<evidence type="ECO:0000255" key="2"/>
<evidence type="ECO:0000256" key="3">
    <source>
        <dbReference type="SAM" id="MobiDB-lite"/>
    </source>
</evidence>
<evidence type="ECO:0000303" key="4">
    <source>
    </source>
</evidence>
<evidence type="ECO:0000303" key="5">
    <source>
    </source>
</evidence>
<evidence type="ECO:0000305" key="6"/>
<sequence length="348" mass="38347">MPFLWGLRQDKEACVGTNNQSYICDTGHCCGQSQCCNYYYELWWFWLVWTVVIILSCCCVCHHRRAKHRLQAQQRQHEINLIAYREAHNYSALPFYFRFLPNSLLPPYEEVVNRPPTPPPPYSAFQLQQQQQLLPPPPQGGPPGGSPPGADPPPQGSQGAQSSPLSGPSRSSTRPPSVADPQSPEVPTDREATKASGTESGSPMAGHGELDPGAFLDQDSECKEELLKDSRSERGGVSPDSEDKTPGRHRRFTGDSGIEVCVCNRGHHDDDLKEFNTLIDDALDGPLDFCDSCHVRPPVDEEEGLCLSSEGQAREHGHPHLPRPPACLLLNTINEQDSPNSQHSGSPS</sequence>
<dbReference type="EMBL" id="AK052400">
    <property type="protein sequence ID" value="BAC34974.1"/>
    <property type="molecule type" value="mRNA"/>
</dbReference>
<dbReference type="EMBL" id="AK078491">
    <property type="protein sequence ID" value="BAC37305.1"/>
    <property type="molecule type" value="mRNA"/>
</dbReference>
<dbReference type="EMBL" id="AK142695">
    <property type="protein sequence ID" value="BAE25164.1"/>
    <property type="molecule type" value="mRNA"/>
</dbReference>
<dbReference type="EMBL" id="AK154686">
    <property type="protein sequence ID" value="BAE32763.1"/>
    <property type="molecule type" value="mRNA"/>
</dbReference>
<dbReference type="EMBL" id="AK169294">
    <property type="protein sequence ID" value="BAE41050.1"/>
    <property type="status" value="ALT_SEQ"/>
    <property type="molecule type" value="mRNA"/>
</dbReference>
<dbReference type="EMBL" id="BC026369">
    <property type="protein sequence ID" value="AAH26369.1"/>
    <property type="status" value="ALT_INIT"/>
    <property type="molecule type" value="mRNA"/>
</dbReference>
<dbReference type="EMBL" id="BC058949">
    <property type="protein sequence ID" value="AAH58949.1"/>
    <property type="status" value="ALT_INIT"/>
    <property type="molecule type" value="mRNA"/>
</dbReference>
<dbReference type="CCDS" id="CCDS29881.2">
    <molecule id="Q8BGW2-3"/>
</dbReference>
<dbReference type="CCDS" id="CCDS50456.1">
    <molecule id="Q8BGW2-4"/>
</dbReference>
<dbReference type="CCDS" id="CCDS50457.1">
    <molecule id="Q8BGW2-1"/>
</dbReference>
<dbReference type="RefSeq" id="NP_001171283.1">
    <molecule id="Q8BGW2-4"/>
    <property type="nucleotide sequence ID" value="NM_001177812.1"/>
</dbReference>
<dbReference type="RefSeq" id="NP_001171284.1">
    <molecule id="Q8BGW2-1"/>
    <property type="nucleotide sequence ID" value="NM_001177813.1"/>
</dbReference>
<dbReference type="RefSeq" id="NP_666211.3">
    <molecule id="Q8BGW2-3"/>
    <property type="nucleotide sequence ID" value="NM_146099.3"/>
</dbReference>
<dbReference type="BioGRID" id="230486">
    <property type="interactions" value="6"/>
</dbReference>
<dbReference type="FunCoup" id="Q8BGW2">
    <property type="interactions" value="67"/>
</dbReference>
<dbReference type="STRING" id="10090.ENSMUSP00000096975"/>
<dbReference type="GlyGen" id="Q8BGW2">
    <property type="glycosylation" value="1 site"/>
</dbReference>
<dbReference type="iPTMnet" id="Q8BGW2"/>
<dbReference type="PhosphoSitePlus" id="Q8BGW2"/>
<dbReference type="jPOST" id="Q8BGW2"/>
<dbReference type="PaxDb" id="10090-ENSMUSP00000096975"/>
<dbReference type="ProteomicsDB" id="297626">
    <molecule id="Q8BGW2-1"/>
</dbReference>
<dbReference type="ProteomicsDB" id="297628">
    <molecule id="Q8BGW2-3"/>
</dbReference>
<dbReference type="ProteomicsDB" id="297629">
    <molecule id="Q8BGW2-4"/>
</dbReference>
<dbReference type="Pumba" id="Q8BGW2"/>
<dbReference type="Antibodypedia" id="48471">
    <property type="antibodies" value="71 antibodies from 15 providers"/>
</dbReference>
<dbReference type="DNASU" id="226178"/>
<dbReference type="Ensembl" id="ENSMUST00000099376.11">
    <molecule id="Q8BGW2-4"/>
    <property type="protein sequence ID" value="ENSMUSP00000096975.5"/>
    <property type="gene ID" value="ENSMUSG00000047731.18"/>
</dbReference>
<dbReference type="Ensembl" id="ENSMUST00000111855.5">
    <molecule id="Q8BGW2-1"/>
    <property type="protein sequence ID" value="ENSMUSP00000107486.5"/>
    <property type="gene ID" value="ENSMUSG00000047731.18"/>
</dbReference>
<dbReference type="Ensembl" id="ENSMUST00000132202.3">
    <molecule id="Q8BGW2-2"/>
    <property type="protein sequence ID" value="ENSMUSP00000121821.3"/>
    <property type="gene ID" value="ENSMUSG00000047731.18"/>
</dbReference>
<dbReference type="Ensembl" id="ENSMUST00000138302.9">
    <molecule id="Q8BGW2-3"/>
    <property type="protein sequence ID" value="ENSMUSP00000117929.3"/>
    <property type="gene ID" value="ENSMUSG00000047731.18"/>
</dbReference>
<dbReference type="GeneID" id="226178"/>
<dbReference type="KEGG" id="mmu:226178"/>
<dbReference type="UCSC" id="uc008htw.2">
    <molecule id="Q8BGW2-3"/>
    <property type="organism name" value="mouse"/>
</dbReference>
<dbReference type="UCSC" id="uc008htx.2">
    <molecule id="Q8BGW2-4"/>
    <property type="organism name" value="mouse"/>
</dbReference>
<dbReference type="UCSC" id="uc008hty.2">
    <molecule id="Q8BGW2-1"/>
    <property type="organism name" value="mouse"/>
</dbReference>
<dbReference type="AGR" id="MGI:107577"/>
<dbReference type="CTD" id="54838"/>
<dbReference type="MGI" id="MGI:107577">
    <property type="gene designation" value="Wbp1l"/>
</dbReference>
<dbReference type="VEuPathDB" id="HostDB:ENSMUSG00000047731"/>
<dbReference type="eggNOG" id="ENOG502QQBJ">
    <property type="taxonomic scope" value="Eukaryota"/>
</dbReference>
<dbReference type="GeneTree" id="ENSGT00950000183109"/>
<dbReference type="HOGENOM" id="CLU_2385571_0_0_1"/>
<dbReference type="InParanoid" id="Q8BGW2"/>
<dbReference type="OMA" id="CSGLKMG"/>
<dbReference type="OrthoDB" id="71587at9989"/>
<dbReference type="PhylomeDB" id="Q8BGW2"/>
<dbReference type="TreeFam" id="TF330726"/>
<dbReference type="BioGRID-ORCS" id="226178">
    <property type="hits" value="2 hits in 77 CRISPR screens"/>
</dbReference>
<dbReference type="ChiTaRS" id="Wbp1l">
    <property type="organism name" value="mouse"/>
</dbReference>
<dbReference type="PRO" id="PR:Q8BGW2"/>
<dbReference type="Proteomes" id="UP000000589">
    <property type="component" value="Chromosome 19"/>
</dbReference>
<dbReference type="RNAct" id="Q8BGW2">
    <property type="molecule type" value="protein"/>
</dbReference>
<dbReference type="Bgee" id="ENSMUSG00000047731">
    <property type="expression patterns" value="Expressed in ileal epithelium and 260 other cell types or tissues"/>
</dbReference>
<dbReference type="GO" id="GO:0016020">
    <property type="term" value="C:membrane"/>
    <property type="evidence" value="ECO:0007669"/>
    <property type="project" value="UniProtKB-SubCell"/>
</dbReference>
<dbReference type="GO" id="GO:0031625">
    <property type="term" value="F:ubiquitin protein ligase binding"/>
    <property type="evidence" value="ECO:0000353"/>
    <property type="project" value="MGI"/>
</dbReference>
<dbReference type="GO" id="GO:0038160">
    <property type="term" value="P:CXCL12-activated CXCR4 signaling pathway"/>
    <property type="evidence" value="ECO:0000315"/>
    <property type="project" value="MGI"/>
</dbReference>
<dbReference type="GO" id="GO:0030097">
    <property type="term" value="P:hemopoiesis"/>
    <property type="evidence" value="ECO:0000315"/>
    <property type="project" value="MGI"/>
</dbReference>
<dbReference type="GO" id="GO:0031398">
    <property type="term" value="P:positive regulation of protein ubiquitination"/>
    <property type="evidence" value="ECO:0000314"/>
    <property type="project" value="MGI"/>
</dbReference>
<dbReference type="InterPro" id="IPR021684">
    <property type="entry name" value="WBP1-like"/>
</dbReference>
<dbReference type="InterPro" id="IPR051994">
    <property type="entry name" value="WW_domain-binding"/>
</dbReference>
<dbReference type="PANTHER" id="PTHR16209">
    <property type="entry name" value="VESICULAR, OVEREXPRESSED IN CANCER, PROSURVIVAL PROTEIN 1"/>
    <property type="match status" value="1"/>
</dbReference>
<dbReference type="PANTHER" id="PTHR16209:SF4">
    <property type="entry name" value="WW DOMAIN BINDING PROTEIN 1-LIKE"/>
    <property type="match status" value="1"/>
</dbReference>
<dbReference type="Pfam" id="PF11669">
    <property type="entry name" value="WBP-1"/>
    <property type="match status" value="1"/>
</dbReference>
<name>WBP1L_MOUSE</name>
<accession>Q8BGW2</accession>
<accession>Q3TF48</accession>
<accession>Q3U3M2</accession>
<accession>Q6PD43</accession>
<accession>Q8R0W8</accession>